<accession>Q2A1G9</accession>
<feature type="chain" id="PRO_1000000109" description="Ribosome-binding factor A">
    <location>
        <begin position="1"/>
        <end position="143"/>
    </location>
</feature>
<feature type="region of interest" description="Disordered" evidence="2">
    <location>
        <begin position="123"/>
        <end position="143"/>
    </location>
</feature>
<protein>
    <recommendedName>
        <fullName evidence="1">Ribosome-binding factor A</fullName>
    </recommendedName>
</protein>
<proteinExistence type="inferred from homology"/>
<comment type="function">
    <text evidence="1">One of several proteins that assist in the late maturation steps of the functional core of the 30S ribosomal subunit. Associates with free 30S ribosomal subunits (but not with 30S subunits that are part of 70S ribosomes or polysomes). Required for efficient processing of 16S rRNA. May interact with the 5'-terminal helix region of 16S rRNA.</text>
</comment>
<comment type="subunit">
    <text evidence="1">Monomer. Binds 30S ribosomal subunits, but not 50S ribosomal subunits or 70S ribosomes.</text>
</comment>
<comment type="subcellular location">
    <subcellularLocation>
        <location evidence="1">Cytoplasm</location>
    </subcellularLocation>
</comment>
<comment type="similarity">
    <text evidence="1">Belongs to the RbfA family.</text>
</comment>
<gene>
    <name evidence="1" type="primary">rbfA</name>
    <name type="ordered locus">FTL_1808</name>
</gene>
<dbReference type="EMBL" id="AM233362">
    <property type="protein sequence ID" value="CAJ80247.1"/>
    <property type="molecule type" value="Genomic_DNA"/>
</dbReference>
<dbReference type="RefSeq" id="WP_003017352.1">
    <property type="nucleotide sequence ID" value="NZ_CP009694.1"/>
</dbReference>
<dbReference type="SMR" id="Q2A1G9"/>
<dbReference type="KEGG" id="ftl:FTL_1808"/>
<dbReference type="Proteomes" id="UP000001944">
    <property type="component" value="Chromosome"/>
</dbReference>
<dbReference type="GO" id="GO:0005829">
    <property type="term" value="C:cytosol"/>
    <property type="evidence" value="ECO:0007669"/>
    <property type="project" value="TreeGrafter"/>
</dbReference>
<dbReference type="GO" id="GO:0043024">
    <property type="term" value="F:ribosomal small subunit binding"/>
    <property type="evidence" value="ECO:0007669"/>
    <property type="project" value="TreeGrafter"/>
</dbReference>
<dbReference type="GO" id="GO:0030490">
    <property type="term" value="P:maturation of SSU-rRNA"/>
    <property type="evidence" value="ECO:0007669"/>
    <property type="project" value="UniProtKB-UniRule"/>
</dbReference>
<dbReference type="Gene3D" id="3.30.300.20">
    <property type="match status" value="1"/>
</dbReference>
<dbReference type="HAMAP" id="MF_00003">
    <property type="entry name" value="RbfA"/>
    <property type="match status" value="1"/>
</dbReference>
<dbReference type="InterPro" id="IPR015946">
    <property type="entry name" value="KH_dom-like_a/b"/>
</dbReference>
<dbReference type="InterPro" id="IPR000238">
    <property type="entry name" value="RbfA"/>
</dbReference>
<dbReference type="InterPro" id="IPR023799">
    <property type="entry name" value="RbfA_dom_sf"/>
</dbReference>
<dbReference type="InterPro" id="IPR020053">
    <property type="entry name" value="Ribosome-bd_factorA_CS"/>
</dbReference>
<dbReference type="NCBIfam" id="TIGR00082">
    <property type="entry name" value="rbfA"/>
    <property type="match status" value="1"/>
</dbReference>
<dbReference type="PANTHER" id="PTHR33515">
    <property type="entry name" value="RIBOSOME-BINDING FACTOR A, CHLOROPLASTIC-RELATED"/>
    <property type="match status" value="1"/>
</dbReference>
<dbReference type="PANTHER" id="PTHR33515:SF1">
    <property type="entry name" value="RIBOSOME-BINDING FACTOR A, CHLOROPLASTIC-RELATED"/>
    <property type="match status" value="1"/>
</dbReference>
<dbReference type="Pfam" id="PF02033">
    <property type="entry name" value="RBFA"/>
    <property type="match status" value="1"/>
</dbReference>
<dbReference type="SUPFAM" id="SSF89919">
    <property type="entry name" value="Ribosome-binding factor A, RbfA"/>
    <property type="match status" value="1"/>
</dbReference>
<dbReference type="PROSITE" id="PS01319">
    <property type="entry name" value="RBFA"/>
    <property type="match status" value="1"/>
</dbReference>
<name>RBFA_FRATH</name>
<evidence type="ECO:0000255" key="1">
    <source>
        <dbReference type="HAMAP-Rule" id="MF_00003"/>
    </source>
</evidence>
<evidence type="ECO:0000256" key="2">
    <source>
        <dbReference type="SAM" id="MobiDB-lite"/>
    </source>
</evidence>
<organism>
    <name type="scientific">Francisella tularensis subsp. holarctica (strain LVS)</name>
    <dbReference type="NCBI Taxonomy" id="376619"/>
    <lineage>
        <taxon>Bacteria</taxon>
        <taxon>Pseudomonadati</taxon>
        <taxon>Pseudomonadota</taxon>
        <taxon>Gammaproteobacteria</taxon>
        <taxon>Thiotrichales</taxon>
        <taxon>Francisellaceae</taxon>
        <taxon>Francisella</taxon>
    </lineage>
</organism>
<reference key="1">
    <citation type="submission" date="2006-03" db="EMBL/GenBank/DDBJ databases">
        <title>Complete genome sequence of Francisella tularensis LVS (Live Vaccine Strain).</title>
        <authorList>
            <person name="Chain P."/>
            <person name="Larimer F."/>
            <person name="Land M."/>
            <person name="Stilwagen S."/>
            <person name="Larsson P."/>
            <person name="Bearden S."/>
            <person name="Chu M."/>
            <person name="Oyston P."/>
            <person name="Forsman M."/>
            <person name="Andersson S."/>
            <person name="Lindler L."/>
            <person name="Titball R."/>
            <person name="Garcia E."/>
        </authorList>
    </citation>
    <scope>NUCLEOTIDE SEQUENCE [LARGE SCALE GENOMIC DNA]</scope>
    <source>
        <strain>LVS</strain>
    </source>
</reference>
<sequence length="143" mass="16416">MAAEGRVQRVASEFQKVISLLLRTRIKDAKLASATITEVDLSKDLSYAKIYYTCLAIEDAEYIDKAFEKSKGFFRSSIAKSLSLRIVPNLKFIYDTSLDYGMQMEEKIQQALEADSKIIKQDDKSLQENYKQNDKETKAEKLR</sequence>
<keyword id="KW-0963">Cytoplasm</keyword>
<keyword id="KW-1185">Reference proteome</keyword>
<keyword id="KW-0690">Ribosome biogenesis</keyword>